<name>LIPB_PSEF5</name>
<keyword id="KW-0012">Acyltransferase</keyword>
<keyword id="KW-0963">Cytoplasm</keyword>
<keyword id="KW-0808">Transferase</keyword>
<proteinExistence type="inferred from homology"/>
<evidence type="ECO:0000255" key="1">
    <source>
        <dbReference type="HAMAP-Rule" id="MF_00013"/>
    </source>
</evidence>
<evidence type="ECO:0000255" key="2">
    <source>
        <dbReference type="PROSITE-ProRule" id="PRU01067"/>
    </source>
</evidence>
<comment type="function">
    <text evidence="1">Catalyzes the transfer of endogenously produced octanoic acid from octanoyl-acyl-carrier-protein onto the lipoyl domains of lipoate-dependent enzymes. Lipoyl-ACP can also act as a substrate although octanoyl-ACP is likely to be the physiological substrate.</text>
</comment>
<comment type="catalytic activity">
    <reaction evidence="1">
        <text>octanoyl-[ACP] + L-lysyl-[protein] = N(6)-octanoyl-L-lysyl-[protein] + holo-[ACP] + H(+)</text>
        <dbReference type="Rhea" id="RHEA:17665"/>
        <dbReference type="Rhea" id="RHEA-COMP:9636"/>
        <dbReference type="Rhea" id="RHEA-COMP:9685"/>
        <dbReference type="Rhea" id="RHEA-COMP:9752"/>
        <dbReference type="Rhea" id="RHEA-COMP:9928"/>
        <dbReference type="ChEBI" id="CHEBI:15378"/>
        <dbReference type="ChEBI" id="CHEBI:29969"/>
        <dbReference type="ChEBI" id="CHEBI:64479"/>
        <dbReference type="ChEBI" id="CHEBI:78463"/>
        <dbReference type="ChEBI" id="CHEBI:78809"/>
        <dbReference type="EC" id="2.3.1.181"/>
    </reaction>
</comment>
<comment type="pathway">
    <text evidence="1">Protein modification; protein lipoylation via endogenous pathway; protein N(6)-(lipoyl)lysine from octanoyl-[acyl-carrier-protein]: step 1/2.</text>
</comment>
<comment type="subcellular location">
    <subcellularLocation>
        <location evidence="1">Cytoplasm</location>
    </subcellularLocation>
</comment>
<comment type="miscellaneous">
    <text evidence="1">In the reaction, the free carboxyl group of octanoic acid is attached via an amide linkage to the epsilon-amino group of a specific lysine residue of lipoyl domains of lipoate-dependent enzymes.</text>
</comment>
<comment type="similarity">
    <text evidence="1">Belongs to the LipB family.</text>
</comment>
<gene>
    <name evidence="1" type="primary">lipB</name>
    <name type="ordered locus">PFL_5446</name>
</gene>
<organism>
    <name type="scientific">Pseudomonas fluorescens (strain ATCC BAA-477 / NRRL B-23932 / Pf-5)</name>
    <dbReference type="NCBI Taxonomy" id="220664"/>
    <lineage>
        <taxon>Bacteria</taxon>
        <taxon>Pseudomonadati</taxon>
        <taxon>Pseudomonadota</taxon>
        <taxon>Gammaproteobacteria</taxon>
        <taxon>Pseudomonadales</taxon>
        <taxon>Pseudomonadaceae</taxon>
        <taxon>Pseudomonas</taxon>
    </lineage>
</organism>
<dbReference type="EC" id="2.3.1.181" evidence="1"/>
<dbReference type="EMBL" id="CP000076">
    <property type="protein sequence ID" value="AAY94656.1"/>
    <property type="molecule type" value="Genomic_DNA"/>
</dbReference>
<dbReference type="RefSeq" id="WP_011063664.1">
    <property type="nucleotide sequence ID" value="NC_004129.6"/>
</dbReference>
<dbReference type="SMR" id="Q4K5G9"/>
<dbReference type="STRING" id="220664.PFL_5446"/>
<dbReference type="KEGG" id="pfl:PFL_5446"/>
<dbReference type="PATRIC" id="fig|220664.5.peg.5559"/>
<dbReference type="eggNOG" id="COG0321">
    <property type="taxonomic scope" value="Bacteria"/>
</dbReference>
<dbReference type="HOGENOM" id="CLU_035168_3_1_6"/>
<dbReference type="UniPathway" id="UPA00538">
    <property type="reaction ID" value="UER00592"/>
</dbReference>
<dbReference type="Proteomes" id="UP000008540">
    <property type="component" value="Chromosome"/>
</dbReference>
<dbReference type="GO" id="GO:0005737">
    <property type="term" value="C:cytoplasm"/>
    <property type="evidence" value="ECO:0007669"/>
    <property type="project" value="UniProtKB-SubCell"/>
</dbReference>
<dbReference type="GO" id="GO:0033819">
    <property type="term" value="F:lipoyl(octanoyl) transferase activity"/>
    <property type="evidence" value="ECO:0007669"/>
    <property type="project" value="UniProtKB-EC"/>
</dbReference>
<dbReference type="GO" id="GO:0036211">
    <property type="term" value="P:protein modification process"/>
    <property type="evidence" value="ECO:0007669"/>
    <property type="project" value="InterPro"/>
</dbReference>
<dbReference type="CDD" id="cd16444">
    <property type="entry name" value="LipB"/>
    <property type="match status" value="1"/>
</dbReference>
<dbReference type="FunFam" id="3.30.930.10:FF:000020">
    <property type="entry name" value="Octanoyltransferase"/>
    <property type="match status" value="1"/>
</dbReference>
<dbReference type="Gene3D" id="3.30.930.10">
    <property type="entry name" value="Bira Bifunctional Protein, Domain 2"/>
    <property type="match status" value="1"/>
</dbReference>
<dbReference type="HAMAP" id="MF_00013">
    <property type="entry name" value="LipB"/>
    <property type="match status" value="1"/>
</dbReference>
<dbReference type="InterPro" id="IPR045864">
    <property type="entry name" value="aa-tRNA-synth_II/BPL/LPL"/>
</dbReference>
<dbReference type="InterPro" id="IPR004143">
    <property type="entry name" value="BPL_LPL_catalytic"/>
</dbReference>
<dbReference type="InterPro" id="IPR000544">
    <property type="entry name" value="Octanoyltransferase"/>
</dbReference>
<dbReference type="InterPro" id="IPR020605">
    <property type="entry name" value="Octanoyltransferase_CS"/>
</dbReference>
<dbReference type="NCBIfam" id="TIGR00214">
    <property type="entry name" value="lipB"/>
    <property type="match status" value="1"/>
</dbReference>
<dbReference type="NCBIfam" id="NF010922">
    <property type="entry name" value="PRK14342.1"/>
    <property type="match status" value="1"/>
</dbReference>
<dbReference type="PANTHER" id="PTHR10993:SF7">
    <property type="entry name" value="LIPOYLTRANSFERASE 2, MITOCHONDRIAL-RELATED"/>
    <property type="match status" value="1"/>
</dbReference>
<dbReference type="PANTHER" id="PTHR10993">
    <property type="entry name" value="OCTANOYLTRANSFERASE"/>
    <property type="match status" value="1"/>
</dbReference>
<dbReference type="Pfam" id="PF21948">
    <property type="entry name" value="LplA-B_cat"/>
    <property type="match status" value="1"/>
</dbReference>
<dbReference type="PIRSF" id="PIRSF016262">
    <property type="entry name" value="LPLase"/>
    <property type="match status" value="1"/>
</dbReference>
<dbReference type="SUPFAM" id="SSF55681">
    <property type="entry name" value="Class II aaRS and biotin synthetases"/>
    <property type="match status" value="1"/>
</dbReference>
<dbReference type="PROSITE" id="PS51733">
    <property type="entry name" value="BPL_LPL_CATALYTIC"/>
    <property type="match status" value="1"/>
</dbReference>
<dbReference type="PROSITE" id="PS01313">
    <property type="entry name" value="LIPB"/>
    <property type="match status" value="1"/>
</dbReference>
<protein>
    <recommendedName>
        <fullName evidence="1">Octanoyltransferase</fullName>
        <ecNumber evidence="1">2.3.1.181</ecNumber>
    </recommendedName>
    <alternativeName>
        <fullName evidence="1">Lipoate-protein ligase B</fullName>
    </alternativeName>
    <alternativeName>
        <fullName evidence="1">Lipoyl/octanoyl transferase</fullName>
    </alternativeName>
    <alternativeName>
        <fullName evidence="1">Octanoyl-[acyl-carrier-protein]-protein N-octanoyltransferase</fullName>
    </alternativeName>
</protein>
<accession>Q4K5G9</accession>
<sequence length="215" mass="23521">MPQTLGFRELGQMAYEPVWQAMQRFTNERGTDAPDEVWLVQHPPVFTQGQAGKAEHLLLPGDIPVVQVDRGGQVTYHGPGQLVAYLLLDVRRLGFGVRDLVNRMEHCLIELLASYGVPAAAKPDAPGVYVNGAKIASLGLRIRHGCSFHGLALNVDMDLQPFRRINPCGYAGLAMTQLSDHAGPIEFAEVSARLRAQLVKHLDYAEQTTLTGGID</sequence>
<reference key="1">
    <citation type="journal article" date="2005" name="Nat. Biotechnol.">
        <title>Complete genome sequence of the plant commensal Pseudomonas fluorescens Pf-5.</title>
        <authorList>
            <person name="Paulsen I.T."/>
            <person name="Press C.M."/>
            <person name="Ravel J."/>
            <person name="Kobayashi D.Y."/>
            <person name="Myers G.S.A."/>
            <person name="Mavrodi D.V."/>
            <person name="DeBoy R.T."/>
            <person name="Seshadri R."/>
            <person name="Ren Q."/>
            <person name="Madupu R."/>
            <person name="Dodson R.J."/>
            <person name="Durkin A.S."/>
            <person name="Brinkac L.M."/>
            <person name="Daugherty S.C."/>
            <person name="Sullivan S.A."/>
            <person name="Rosovitz M.J."/>
            <person name="Gwinn M.L."/>
            <person name="Zhou L."/>
            <person name="Schneider D.J."/>
            <person name="Cartinhour S.W."/>
            <person name="Nelson W.C."/>
            <person name="Weidman J."/>
            <person name="Watkins K."/>
            <person name="Tran K."/>
            <person name="Khouri H."/>
            <person name="Pierson E.A."/>
            <person name="Pierson L.S. III"/>
            <person name="Thomashow L.S."/>
            <person name="Loper J.E."/>
        </authorList>
    </citation>
    <scope>NUCLEOTIDE SEQUENCE [LARGE SCALE GENOMIC DNA]</scope>
    <source>
        <strain>ATCC BAA-477 / NRRL B-23932 / Pf-5</strain>
    </source>
</reference>
<feature type="chain" id="PRO_0000242746" description="Octanoyltransferase">
    <location>
        <begin position="1"/>
        <end position="215"/>
    </location>
</feature>
<feature type="domain" description="BPL/LPL catalytic" evidence="2">
    <location>
        <begin position="31"/>
        <end position="206"/>
    </location>
</feature>
<feature type="active site" description="Acyl-thioester intermediate" evidence="1">
    <location>
        <position position="168"/>
    </location>
</feature>
<feature type="binding site" evidence="1">
    <location>
        <begin position="70"/>
        <end position="77"/>
    </location>
    <ligand>
        <name>substrate</name>
    </ligand>
</feature>
<feature type="binding site" evidence="1">
    <location>
        <begin position="137"/>
        <end position="139"/>
    </location>
    <ligand>
        <name>substrate</name>
    </ligand>
</feature>
<feature type="binding site" evidence="1">
    <location>
        <begin position="150"/>
        <end position="152"/>
    </location>
    <ligand>
        <name>substrate</name>
    </ligand>
</feature>
<feature type="site" description="Lowers pKa of active site Cys" evidence="1">
    <location>
        <position position="134"/>
    </location>
</feature>